<gene>
    <name type="ordered locus">GSU1048</name>
</gene>
<keyword id="KW-1185">Reference proteome</keyword>
<proteinExistence type="inferred from homology"/>
<accession>Q74EB5</accession>
<organism>
    <name type="scientific">Geobacter sulfurreducens (strain ATCC 51573 / DSM 12127 / PCA)</name>
    <dbReference type="NCBI Taxonomy" id="243231"/>
    <lineage>
        <taxon>Bacteria</taxon>
        <taxon>Pseudomonadati</taxon>
        <taxon>Thermodesulfobacteriota</taxon>
        <taxon>Desulfuromonadia</taxon>
        <taxon>Geobacterales</taxon>
        <taxon>Geobacteraceae</taxon>
        <taxon>Geobacter</taxon>
    </lineage>
</organism>
<feature type="chain" id="PRO_1000130387" description="UPF0225 protein GSU1048">
    <location>
        <begin position="1"/>
        <end position="161"/>
    </location>
</feature>
<sequence>MTNLCPCGTGKSFGECCEPLVTGARAALTAEELMRSRYTAYTRAEIGYIHDTTHPDHRADFDEKGTREWAESSQWEGLEILATAGGGPADTEGRVEFIARYRDTGGRRTHHELAEFRKVDDAWYFTDGYGIKPQPAVSTKIGRNDPCTCGSGKKYKKCCGA</sequence>
<dbReference type="EMBL" id="AE017180">
    <property type="protein sequence ID" value="AAR34374.1"/>
    <property type="molecule type" value="Genomic_DNA"/>
</dbReference>
<dbReference type="RefSeq" id="NP_952101.1">
    <property type="nucleotide sequence ID" value="NC_002939.5"/>
</dbReference>
<dbReference type="RefSeq" id="WP_010941709.1">
    <property type="nucleotide sequence ID" value="NC_002939.5"/>
</dbReference>
<dbReference type="SMR" id="Q74EB5"/>
<dbReference type="FunCoup" id="Q74EB5">
    <property type="interactions" value="24"/>
</dbReference>
<dbReference type="STRING" id="243231.GSU1048"/>
<dbReference type="EnsemblBacteria" id="AAR34374">
    <property type="protein sequence ID" value="AAR34374"/>
    <property type="gene ID" value="GSU1048"/>
</dbReference>
<dbReference type="KEGG" id="gsu:GSU1048"/>
<dbReference type="PATRIC" id="fig|243231.5.peg.1046"/>
<dbReference type="eggNOG" id="COG3012">
    <property type="taxonomic scope" value="Bacteria"/>
</dbReference>
<dbReference type="HOGENOM" id="CLU_099590_0_0_7"/>
<dbReference type="InParanoid" id="Q74EB5"/>
<dbReference type="OrthoDB" id="21421at2"/>
<dbReference type="Proteomes" id="UP000000577">
    <property type="component" value="Chromosome"/>
</dbReference>
<dbReference type="Gene3D" id="3.10.450.50">
    <property type="match status" value="1"/>
</dbReference>
<dbReference type="HAMAP" id="MF_00612">
    <property type="entry name" value="UPF0225"/>
    <property type="match status" value="1"/>
</dbReference>
<dbReference type="InterPro" id="IPR032710">
    <property type="entry name" value="NTF2-like_dom_sf"/>
</dbReference>
<dbReference type="InterPro" id="IPR004027">
    <property type="entry name" value="SEC_C_motif"/>
</dbReference>
<dbReference type="InterPro" id="IPR023006">
    <property type="entry name" value="UPF0225"/>
</dbReference>
<dbReference type="InterPro" id="IPR048469">
    <property type="entry name" value="YchJ-like_M"/>
</dbReference>
<dbReference type="NCBIfam" id="NF002449">
    <property type="entry name" value="PRK01617.1"/>
    <property type="match status" value="1"/>
</dbReference>
<dbReference type="NCBIfam" id="NF002486">
    <property type="entry name" value="PRK01752.1"/>
    <property type="match status" value="1"/>
</dbReference>
<dbReference type="PANTHER" id="PTHR33747:SF1">
    <property type="entry name" value="ADENYLATE CYCLASE-ASSOCIATED CAP C-TERMINAL DOMAIN-CONTAINING PROTEIN"/>
    <property type="match status" value="1"/>
</dbReference>
<dbReference type="PANTHER" id="PTHR33747">
    <property type="entry name" value="UPF0225 PROTEIN SCO1677"/>
    <property type="match status" value="1"/>
</dbReference>
<dbReference type="Pfam" id="PF02810">
    <property type="entry name" value="SEC-C"/>
    <property type="match status" value="2"/>
</dbReference>
<dbReference type="Pfam" id="PF17775">
    <property type="entry name" value="YchJ_M-like"/>
    <property type="match status" value="1"/>
</dbReference>
<dbReference type="SUPFAM" id="SSF54427">
    <property type="entry name" value="NTF2-like"/>
    <property type="match status" value="1"/>
</dbReference>
<dbReference type="SUPFAM" id="SSF103642">
    <property type="entry name" value="Sec-C motif"/>
    <property type="match status" value="1"/>
</dbReference>
<protein>
    <recommendedName>
        <fullName evidence="1">UPF0225 protein GSU1048</fullName>
    </recommendedName>
</protein>
<name>Y1048_GEOSL</name>
<comment type="similarity">
    <text evidence="1">Belongs to the UPF0225 family.</text>
</comment>
<reference key="1">
    <citation type="journal article" date="2003" name="Science">
        <title>Genome of Geobacter sulfurreducens: metal reduction in subsurface environments.</title>
        <authorList>
            <person name="Methe B.A."/>
            <person name="Nelson K.E."/>
            <person name="Eisen J.A."/>
            <person name="Paulsen I.T."/>
            <person name="Nelson W.C."/>
            <person name="Heidelberg J.F."/>
            <person name="Wu D."/>
            <person name="Wu M."/>
            <person name="Ward N.L."/>
            <person name="Beanan M.J."/>
            <person name="Dodson R.J."/>
            <person name="Madupu R."/>
            <person name="Brinkac L.M."/>
            <person name="Daugherty S.C."/>
            <person name="DeBoy R.T."/>
            <person name="Durkin A.S."/>
            <person name="Gwinn M.L."/>
            <person name="Kolonay J.F."/>
            <person name="Sullivan S.A."/>
            <person name="Haft D.H."/>
            <person name="Selengut J."/>
            <person name="Davidsen T.M."/>
            <person name="Zafar N."/>
            <person name="White O."/>
            <person name="Tran B."/>
            <person name="Romero C."/>
            <person name="Forberger H.A."/>
            <person name="Weidman J.F."/>
            <person name="Khouri H.M."/>
            <person name="Feldblyum T.V."/>
            <person name="Utterback T.R."/>
            <person name="Van Aken S.E."/>
            <person name="Lovley D.R."/>
            <person name="Fraser C.M."/>
        </authorList>
    </citation>
    <scope>NUCLEOTIDE SEQUENCE [LARGE SCALE GENOMIC DNA]</scope>
    <source>
        <strain>ATCC 51573 / DSM 12127 / PCA</strain>
    </source>
</reference>
<evidence type="ECO:0000255" key="1">
    <source>
        <dbReference type="HAMAP-Rule" id="MF_00612"/>
    </source>
</evidence>